<protein>
    <recommendedName>
        <fullName evidence="1">NADPH-dependent 7-cyano-7-deazaguanine reductase</fullName>
        <ecNumber evidence="1">1.7.1.13</ecNumber>
    </recommendedName>
    <alternativeName>
        <fullName evidence="1">7-cyano-7-carbaguanine reductase</fullName>
    </alternativeName>
    <alternativeName>
        <fullName evidence="1">NADPH-dependent nitrile oxidoreductase</fullName>
    </alternativeName>
    <alternativeName>
        <fullName evidence="1">PreQ(0) reductase</fullName>
    </alternativeName>
</protein>
<keyword id="KW-0963">Cytoplasm</keyword>
<keyword id="KW-0521">NADP</keyword>
<keyword id="KW-0560">Oxidoreductase</keyword>
<keyword id="KW-0671">Queuosine biosynthesis</keyword>
<keyword id="KW-1185">Reference proteome</keyword>
<proteinExistence type="inferred from homology"/>
<comment type="function">
    <text evidence="1">Catalyzes the NADPH-dependent reduction of 7-cyano-7-deazaguanine (preQ0) to 7-aminomethyl-7-deazaguanine (preQ1).</text>
</comment>
<comment type="catalytic activity">
    <reaction evidence="1">
        <text>7-aminomethyl-7-carbaguanine + 2 NADP(+) = 7-cyano-7-deazaguanine + 2 NADPH + 3 H(+)</text>
        <dbReference type="Rhea" id="RHEA:13409"/>
        <dbReference type="ChEBI" id="CHEBI:15378"/>
        <dbReference type="ChEBI" id="CHEBI:45075"/>
        <dbReference type="ChEBI" id="CHEBI:57783"/>
        <dbReference type="ChEBI" id="CHEBI:58349"/>
        <dbReference type="ChEBI" id="CHEBI:58703"/>
        <dbReference type="EC" id="1.7.1.13"/>
    </reaction>
</comment>
<comment type="pathway">
    <text evidence="1">tRNA modification; tRNA-queuosine biosynthesis.</text>
</comment>
<comment type="subunit">
    <text evidence="1">Homodimer.</text>
</comment>
<comment type="subcellular location">
    <subcellularLocation>
        <location evidence="1">Cytoplasm</location>
    </subcellularLocation>
</comment>
<comment type="similarity">
    <text evidence="1">Belongs to the GTP cyclohydrolase I family. QueF type 2 subfamily.</text>
</comment>
<feature type="chain" id="PRO_1000213072" description="NADPH-dependent 7-cyano-7-deazaguanine reductase">
    <location>
        <begin position="1"/>
        <end position="281"/>
    </location>
</feature>
<feature type="active site" description="Thioimide intermediate" evidence="1">
    <location>
        <position position="189"/>
    </location>
</feature>
<feature type="active site" description="Proton donor" evidence="1">
    <location>
        <position position="196"/>
    </location>
</feature>
<feature type="binding site" evidence="1">
    <location>
        <begin position="88"/>
        <end position="90"/>
    </location>
    <ligand>
        <name>substrate</name>
    </ligand>
</feature>
<feature type="binding site" evidence="1">
    <location>
        <begin position="90"/>
        <end position="91"/>
    </location>
    <ligand>
        <name>NADPH</name>
        <dbReference type="ChEBI" id="CHEBI:57783"/>
    </ligand>
</feature>
<feature type="binding site" evidence="1">
    <location>
        <begin position="228"/>
        <end position="229"/>
    </location>
    <ligand>
        <name>substrate</name>
    </ligand>
</feature>
<feature type="binding site" evidence="1">
    <location>
        <begin position="257"/>
        <end position="258"/>
    </location>
    <ligand>
        <name>NADPH</name>
        <dbReference type="ChEBI" id="CHEBI:57783"/>
    </ligand>
</feature>
<accession>B4F2E4</accession>
<dbReference type="EC" id="1.7.1.13" evidence="1"/>
<dbReference type="EMBL" id="AM942759">
    <property type="protein sequence ID" value="CAR44541.1"/>
    <property type="molecule type" value="Genomic_DNA"/>
</dbReference>
<dbReference type="RefSeq" id="WP_004245492.1">
    <property type="nucleotide sequence ID" value="NC_010554.1"/>
</dbReference>
<dbReference type="SMR" id="B4F2E4"/>
<dbReference type="EnsemblBacteria" id="CAR44541">
    <property type="protein sequence ID" value="CAR44541"/>
    <property type="gene ID" value="PMI2296"/>
</dbReference>
<dbReference type="GeneID" id="6800344"/>
<dbReference type="KEGG" id="pmr:PMI2296"/>
<dbReference type="eggNOG" id="COG0780">
    <property type="taxonomic scope" value="Bacteria"/>
</dbReference>
<dbReference type="eggNOG" id="COG2904">
    <property type="taxonomic scope" value="Bacteria"/>
</dbReference>
<dbReference type="HOGENOM" id="CLU_054738_0_0_6"/>
<dbReference type="UniPathway" id="UPA00392"/>
<dbReference type="Proteomes" id="UP000008319">
    <property type="component" value="Chromosome"/>
</dbReference>
<dbReference type="GO" id="GO:0005737">
    <property type="term" value="C:cytoplasm"/>
    <property type="evidence" value="ECO:0007669"/>
    <property type="project" value="UniProtKB-SubCell"/>
</dbReference>
<dbReference type="GO" id="GO:0033739">
    <property type="term" value="F:preQ1 synthase activity"/>
    <property type="evidence" value="ECO:0007669"/>
    <property type="project" value="UniProtKB-UniRule"/>
</dbReference>
<dbReference type="GO" id="GO:0008616">
    <property type="term" value="P:queuosine biosynthetic process"/>
    <property type="evidence" value="ECO:0007669"/>
    <property type="project" value="UniProtKB-UniRule"/>
</dbReference>
<dbReference type="GO" id="GO:0006400">
    <property type="term" value="P:tRNA modification"/>
    <property type="evidence" value="ECO:0007669"/>
    <property type="project" value="UniProtKB-UniRule"/>
</dbReference>
<dbReference type="Gene3D" id="3.30.1130.10">
    <property type="match status" value="2"/>
</dbReference>
<dbReference type="HAMAP" id="MF_00817">
    <property type="entry name" value="QueF_type2"/>
    <property type="match status" value="1"/>
</dbReference>
<dbReference type="InterPro" id="IPR043133">
    <property type="entry name" value="GTP-CH-I_C/QueF"/>
</dbReference>
<dbReference type="InterPro" id="IPR050084">
    <property type="entry name" value="NADPH_dep_7-cyano-7-deazaG_red"/>
</dbReference>
<dbReference type="InterPro" id="IPR029500">
    <property type="entry name" value="QueF"/>
</dbReference>
<dbReference type="InterPro" id="IPR029139">
    <property type="entry name" value="QueF_N"/>
</dbReference>
<dbReference type="InterPro" id="IPR016428">
    <property type="entry name" value="QueF_type2"/>
</dbReference>
<dbReference type="NCBIfam" id="TIGR03138">
    <property type="entry name" value="QueF"/>
    <property type="match status" value="1"/>
</dbReference>
<dbReference type="PANTHER" id="PTHR34354">
    <property type="entry name" value="NADPH-DEPENDENT 7-CYANO-7-DEAZAGUANINE REDUCTASE"/>
    <property type="match status" value="1"/>
</dbReference>
<dbReference type="PANTHER" id="PTHR34354:SF1">
    <property type="entry name" value="NADPH-DEPENDENT 7-CYANO-7-DEAZAGUANINE REDUCTASE"/>
    <property type="match status" value="1"/>
</dbReference>
<dbReference type="Pfam" id="PF14489">
    <property type="entry name" value="QueF"/>
    <property type="match status" value="1"/>
</dbReference>
<dbReference type="Pfam" id="PF14819">
    <property type="entry name" value="QueF_N"/>
    <property type="match status" value="1"/>
</dbReference>
<dbReference type="PIRSF" id="PIRSF004750">
    <property type="entry name" value="Nitrile_oxidored_YqcD_prd"/>
    <property type="match status" value="1"/>
</dbReference>
<dbReference type="SUPFAM" id="SSF55620">
    <property type="entry name" value="Tetrahydrobiopterin biosynthesis enzymes-like"/>
    <property type="match status" value="1"/>
</dbReference>
<gene>
    <name evidence="1" type="primary">queF</name>
    <name type="ordered locus">PMI2296</name>
</gene>
<organism>
    <name type="scientific">Proteus mirabilis (strain HI4320)</name>
    <dbReference type="NCBI Taxonomy" id="529507"/>
    <lineage>
        <taxon>Bacteria</taxon>
        <taxon>Pseudomonadati</taxon>
        <taxon>Pseudomonadota</taxon>
        <taxon>Gammaproteobacteria</taxon>
        <taxon>Enterobacterales</taxon>
        <taxon>Morganellaceae</taxon>
        <taxon>Proteus</taxon>
    </lineage>
</organism>
<name>QUEF_PROMH</name>
<evidence type="ECO:0000255" key="1">
    <source>
        <dbReference type="HAMAP-Rule" id="MF_00817"/>
    </source>
</evidence>
<reference key="1">
    <citation type="journal article" date="2008" name="J. Bacteriol.">
        <title>Complete genome sequence of uropathogenic Proteus mirabilis, a master of both adherence and motility.</title>
        <authorList>
            <person name="Pearson M.M."/>
            <person name="Sebaihia M."/>
            <person name="Churcher C."/>
            <person name="Quail M.A."/>
            <person name="Seshasayee A.S."/>
            <person name="Luscombe N.M."/>
            <person name="Abdellah Z."/>
            <person name="Arrosmith C."/>
            <person name="Atkin B."/>
            <person name="Chillingworth T."/>
            <person name="Hauser H."/>
            <person name="Jagels K."/>
            <person name="Moule S."/>
            <person name="Mungall K."/>
            <person name="Norbertczak H."/>
            <person name="Rabbinowitsch E."/>
            <person name="Walker D."/>
            <person name="Whithead S."/>
            <person name="Thomson N.R."/>
            <person name="Rather P.N."/>
            <person name="Parkhill J."/>
            <person name="Mobley H.L.T."/>
        </authorList>
    </citation>
    <scope>NUCLEOTIDE SEQUENCE [LARGE SCALE GENOMIC DNA]</scope>
    <source>
        <strain>HI4320</strain>
    </source>
</reference>
<sequence>MSLYQGDKALEALSLGKETQYHTHYDASLLQGVPRRLNRDSLSLTADNLPFHGGDIWTMYELSWLNSQGLPQVAIGHVELDATTENLIESKSFKLYLNSFNQTRFENWHIVEETLLKDLTACAKGRVHLTLYPLSHFTSQPIVDFVGECIDNQPIEIDNYQFDSQWLNGSTTDTLVEETLVSHLLKSNCLITHQPDWGSVMIQYKGKKIDREKLLRYLVSFRQHNEFHEQCVERIFHDIMTFCSPDTLTVYARYTRRGGLDINPWRSNCEFVPETGRLARQ</sequence>